<proteinExistence type="inferred from homology"/>
<keyword id="KW-0028">Amino-acid biosynthesis</keyword>
<keyword id="KW-0963">Cytoplasm</keyword>
<keyword id="KW-0368">Histidine biosynthesis</keyword>
<keyword id="KW-0413">Isomerase</keyword>
<keyword id="KW-1185">Reference proteome</keyword>
<protein>
    <recommendedName>
        <fullName evidence="1">1-(5-phosphoribosyl)-5-[(5-phosphoribosylamino)methylideneamino] imidazole-4-carboxamide isomerase</fullName>
        <ecNumber evidence="1">5.3.1.16</ecNumber>
    </recommendedName>
    <alternativeName>
        <fullName evidence="1">Phosphoribosylformimino-5-aminoimidazole carboxamide ribotide isomerase</fullName>
    </alternativeName>
</protein>
<gene>
    <name evidence="1" type="primary">hisA</name>
    <name type="ordered locus">Tola_1740</name>
</gene>
<feature type="chain" id="PRO_1000213236" description="1-(5-phosphoribosyl)-5-[(5-phosphoribosylamino)methylideneamino] imidazole-4-carboxamide isomerase">
    <location>
        <begin position="1"/>
        <end position="245"/>
    </location>
</feature>
<feature type="active site" description="Proton acceptor" evidence="1">
    <location>
        <position position="7"/>
    </location>
</feature>
<feature type="active site" description="Proton donor" evidence="1">
    <location>
        <position position="129"/>
    </location>
</feature>
<organism>
    <name type="scientific">Tolumonas auensis (strain DSM 9187 / NBRC 110442 / TA 4)</name>
    <dbReference type="NCBI Taxonomy" id="595494"/>
    <lineage>
        <taxon>Bacteria</taxon>
        <taxon>Pseudomonadati</taxon>
        <taxon>Pseudomonadota</taxon>
        <taxon>Gammaproteobacteria</taxon>
        <taxon>Aeromonadales</taxon>
        <taxon>Aeromonadaceae</taxon>
        <taxon>Tolumonas</taxon>
    </lineage>
</organism>
<dbReference type="EC" id="5.3.1.16" evidence="1"/>
<dbReference type="EMBL" id="CP001616">
    <property type="protein sequence ID" value="ACQ93350.1"/>
    <property type="molecule type" value="Genomic_DNA"/>
</dbReference>
<dbReference type="RefSeq" id="WP_015878821.1">
    <property type="nucleotide sequence ID" value="NC_012691.1"/>
</dbReference>
<dbReference type="SMR" id="C4LFI3"/>
<dbReference type="STRING" id="595494.Tola_1740"/>
<dbReference type="KEGG" id="tau:Tola_1740"/>
<dbReference type="eggNOG" id="COG0106">
    <property type="taxonomic scope" value="Bacteria"/>
</dbReference>
<dbReference type="HOGENOM" id="CLU_048577_1_2_6"/>
<dbReference type="OrthoDB" id="9807749at2"/>
<dbReference type="UniPathway" id="UPA00031">
    <property type="reaction ID" value="UER00009"/>
</dbReference>
<dbReference type="Proteomes" id="UP000009073">
    <property type="component" value="Chromosome"/>
</dbReference>
<dbReference type="GO" id="GO:0005737">
    <property type="term" value="C:cytoplasm"/>
    <property type="evidence" value="ECO:0007669"/>
    <property type="project" value="UniProtKB-SubCell"/>
</dbReference>
<dbReference type="GO" id="GO:0003949">
    <property type="term" value="F:1-(5-phosphoribosyl)-5-[(5-phosphoribosylamino)methylideneamino]imidazole-4-carboxamide isomerase activity"/>
    <property type="evidence" value="ECO:0007669"/>
    <property type="project" value="UniProtKB-UniRule"/>
</dbReference>
<dbReference type="GO" id="GO:0000105">
    <property type="term" value="P:L-histidine biosynthetic process"/>
    <property type="evidence" value="ECO:0007669"/>
    <property type="project" value="UniProtKB-UniRule"/>
</dbReference>
<dbReference type="GO" id="GO:0000162">
    <property type="term" value="P:L-tryptophan biosynthetic process"/>
    <property type="evidence" value="ECO:0007669"/>
    <property type="project" value="TreeGrafter"/>
</dbReference>
<dbReference type="CDD" id="cd04732">
    <property type="entry name" value="HisA"/>
    <property type="match status" value="1"/>
</dbReference>
<dbReference type="FunFam" id="3.20.20.70:FF:000009">
    <property type="entry name" value="1-(5-phosphoribosyl)-5-[(5-phosphoribosylamino)methylideneamino] imidazole-4-carboxamide isomerase"/>
    <property type="match status" value="1"/>
</dbReference>
<dbReference type="Gene3D" id="3.20.20.70">
    <property type="entry name" value="Aldolase class I"/>
    <property type="match status" value="1"/>
</dbReference>
<dbReference type="HAMAP" id="MF_01014">
    <property type="entry name" value="HisA"/>
    <property type="match status" value="1"/>
</dbReference>
<dbReference type="InterPro" id="IPR013785">
    <property type="entry name" value="Aldolase_TIM"/>
</dbReference>
<dbReference type="InterPro" id="IPR006062">
    <property type="entry name" value="His_biosynth"/>
</dbReference>
<dbReference type="InterPro" id="IPR006063">
    <property type="entry name" value="HisA_bact_arch"/>
</dbReference>
<dbReference type="InterPro" id="IPR044524">
    <property type="entry name" value="Isoase_HisA-like"/>
</dbReference>
<dbReference type="InterPro" id="IPR023016">
    <property type="entry name" value="Isoase_HisA-like_bact"/>
</dbReference>
<dbReference type="InterPro" id="IPR011060">
    <property type="entry name" value="RibuloseP-bd_barrel"/>
</dbReference>
<dbReference type="NCBIfam" id="TIGR00007">
    <property type="entry name" value="1-(5-phosphoribosyl)-5-[(5-phosphoribosylamino)methylideneamino]imidazole-4-carboxamide isomerase"/>
    <property type="match status" value="1"/>
</dbReference>
<dbReference type="PANTHER" id="PTHR43090">
    <property type="entry name" value="1-(5-PHOSPHORIBOSYL)-5-[(5-PHOSPHORIBOSYLAMINO)METHYLIDENEAMINO] IMIDAZOLE-4-CARBOXAMIDE ISOMERASE"/>
    <property type="match status" value="1"/>
</dbReference>
<dbReference type="PANTHER" id="PTHR43090:SF2">
    <property type="entry name" value="1-(5-PHOSPHORIBOSYL)-5-[(5-PHOSPHORIBOSYLAMINO)METHYLIDENEAMINO] IMIDAZOLE-4-CARBOXAMIDE ISOMERASE"/>
    <property type="match status" value="1"/>
</dbReference>
<dbReference type="Pfam" id="PF00977">
    <property type="entry name" value="His_biosynth"/>
    <property type="match status" value="1"/>
</dbReference>
<dbReference type="SUPFAM" id="SSF51366">
    <property type="entry name" value="Ribulose-phoshate binding barrel"/>
    <property type="match status" value="1"/>
</dbReference>
<name>HIS4_TOLAT</name>
<sequence length="245" mass="26038">MIIPAIDLIDGKVVRLYQGDYGQKTEYSADPQGRFDDYVAQGATQLHLVDLDGAKDSTKRQLTVIRKLLANTKAPVQIGGGVRTEQDVKDLLDAGANRVVIGSTAVKDPVTVAGWVEKYGADKIVLALDVNIDAEGNRKIAVAGWQEDSGVTIEALLAHYLPVGLKHVLCTDISRDGTLQGSNVALYRDLAAQFPQINWQASGGIGGIADIEALKGSGVGGVILGRSLLEGKFTVKEAIACWQDA</sequence>
<comment type="catalytic activity">
    <reaction evidence="1">
        <text>1-(5-phospho-beta-D-ribosyl)-5-[(5-phospho-beta-D-ribosylamino)methylideneamino]imidazole-4-carboxamide = 5-[(5-phospho-1-deoxy-D-ribulos-1-ylimino)methylamino]-1-(5-phospho-beta-D-ribosyl)imidazole-4-carboxamide</text>
        <dbReference type="Rhea" id="RHEA:15469"/>
        <dbReference type="ChEBI" id="CHEBI:58435"/>
        <dbReference type="ChEBI" id="CHEBI:58525"/>
        <dbReference type="EC" id="5.3.1.16"/>
    </reaction>
</comment>
<comment type="pathway">
    <text evidence="1">Amino-acid biosynthesis; L-histidine biosynthesis; L-histidine from 5-phospho-alpha-D-ribose 1-diphosphate: step 4/9.</text>
</comment>
<comment type="subcellular location">
    <subcellularLocation>
        <location evidence="1">Cytoplasm</location>
    </subcellularLocation>
</comment>
<comment type="similarity">
    <text evidence="1">Belongs to the HisA/HisF family.</text>
</comment>
<accession>C4LFI3</accession>
<reference key="1">
    <citation type="submission" date="2009-05" db="EMBL/GenBank/DDBJ databases">
        <title>Complete sequence of Tolumonas auensis DSM 9187.</title>
        <authorList>
            <consortium name="US DOE Joint Genome Institute"/>
            <person name="Lucas S."/>
            <person name="Copeland A."/>
            <person name="Lapidus A."/>
            <person name="Glavina del Rio T."/>
            <person name="Tice H."/>
            <person name="Bruce D."/>
            <person name="Goodwin L."/>
            <person name="Pitluck S."/>
            <person name="Chertkov O."/>
            <person name="Brettin T."/>
            <person name="Detter J.C."/>
            <person name="Han C."/>
            <person name="Larimer F."/>
            <person name="Land M."/>
            <person name="Hauser L."/>
            <person name="Kyrpides N."/>
            <person name="Mikhailova N."/>
            <person name="Spring S."/>
            <person name="Beller H."/>
        </authorList>
    </citation>
    <scope>NUCLEOTIDE SEQUENCE [LARGE SCALE GENOMIC DNA]</scope>
    <source>
        <strain>DSM 9187 / NBRC 110442 / TA 4</strain>
    </source>
</reference>
<evidence type="ECO:0000255" key="1">
    <source>
        <dbReference type="HAMAP-Rule" id="MF_01014"/>
    </source>
</evidence>